<feature type="initiator methionine" description="Removed" evidence="1">
    <location>
        <position position="1"/>
    </location>
</feature>
<feature type="chain" id="PRO_0000221358" description="Histone H3">
    <location>
        <begin position="2"/>
        <end position="136"/>
    </location>
</feature>
<feature type="region of interest" description="Disordered" evidence="2">
    <location>
        <begin position="1"/>
        <end position="43"/>
    </location>
</feature>
<feature type="modified residue" description="N6,N6,N6-trimethyllysine; alternate" evidence="1">
    <location>
        <position position="5"/>
    </location>
</feature>
<feature type="modified residue" description="N6,N6-dimethyllysine; alternate" evidence="1">
    <location>
        <position position="5"/>
    </location>
</feature>
<feature type="modified residue" description="N6-methyllysine; alternate" evidence="1">
    <location>
        <position position="5"/>
    </location>
</feature>
<feature type="modified residue" description="N6-acetyllysine; alternate" evidence="1">
    <location>
        <position position="10"/>
    </location>
</feature>
<feature type="modified residue" description="N6-methyllysine; alternate" evidence="1">
    <location>
        <position position="10"/>
    </location>
</feature>
<feature type="modified residue" description="Phosphoserine" evidence="1">
    <location>
        <position position="11"/>
    </location>
</feature>
<feature type="modified residue" description="N6,N6-dimethyllysine; alternate" evidence="1">
    <location>
        <position position="15"/>
    </location>
</feature>
<feature type="modified residue" description="N6-acetyllysine; alternate" evidence="1">
    <location>
        <position position="15"/>
    </location>
</feature>
<feature type="modified residue" description="N6-methyllysine; alternate" evidence="1">
    <location>
        <position position="15"/>
    </location>
</feature>
<feature type="modified residue" description="N6-acetyllysine; alternate" evidence="1">
    <location>
        <position position="19"/>
    </location>
</feature>
<feature type="modified residue" description="N6-methyllysine; alternate" evidence="1">
    <location>
        <position position="19"/>
    </location>
</feature>
<feature type="modified residue" description="N6-acetyllysine; alternate" evidence="1">
    <location>
        <position position="24"/>
    </location>
</feature>
<feature type="modified residue" description="N6-methyllysine; alternate" evidence="1">
    <location>
        <position position="24"/>
    </location>
</feature>
<feature type="modified residue" description="N6,N6,N6-trimethyllysine; alternate" evidence="1">
    <location>
        <position position="28"/>
    </location>
</feature>
<feature type="modified residue" description="N6,N6-dimethyllysine; alternate" evidence="1">
    <location>
        <position position="28"/>
    </location>
</feature>
<feature type="modified residue" description="N6-acetyllysine; alternate" evidence="1">
    <location>
        <position position="28"/>
    </location>
</feature>
<feature type="modified residue" description="N6-methyllysine; alternate" evidence="1">
    <location>
        <position position="28"/>
    </location>
</feature>
<feature type="modified residue" description="N6,N6,N6-trimethyllysine; alternate" evidence="1">
    <location>
        <position position="37"/>
    </location>
</feature>
<feature type="modified residue" description="N6,N6-dimethyllysine; alternate" evidence="1">
    <location>
        <position position="37"/>
    </location>
</feature>
<feature type="modified residue" description="N6-acetyllysine; alternate" evidence="1">
    <location>
        <position position="37"/>
    </location>
</feature>
<feature type="modified residue" description="N6-methyllysine; alternate" evidence="1">
    <location>
        <position position="37"/>
    </location>
</feature>
<feature type="modified residue" description="N6-acetyllysine" evidence="1">
    <location>
        <position position="57"/>
    </location>
</feature>
<feature type="modified residue" description="N6-acetyllysine" evidence="1">
    <location>
        <position position="65"/>
    </location>
</feature>
<feature type="modified residue" description="N6,N6,N6-trimethyllysine; alternate" evidence="1">
    <location>
        <position position="80"/>
    </location>
</feature>
<feature type="modified residue" description="N6,N6-dimethyllysine; alternate" evidence="1">
    <location>
        <position position="80"/>
    </location>
</feature>
<feature type="modified residue" description="N6-methyllysine; alternate" evidence="1">
    <location>
        <position position="80"/>
    </location>
</feature>
<feature type="sequence conflict" description="In Ref. 1; AAM74217." evidence="3" ref="1">
    <original>K</original>
    <variation>N</variation>
    <location>
        <position position="123"/>
    </location>
</feature>
<reference key="1">
    <citation type="journal article" date="2002" name="Proc. Natl. Acad. Sci. U.S.A.">
        <title>Gene order evolution and paleopolyploidy in hemiascomycete yeasts.</title>
        <authorList>
            <person name="Wong S."/>
            <person name="Butler G."/>
            <person name="Wolfe K.H."/>
        </authorList>
    </citation>
    <scope>NUCLEOTIDE SEQUENCE [GENOMIC DNA]</scope>
    <source>
        <strain>ATCC 2001 / BCRC 20586 / JCM 3761 / NBRC 0622 / NRRL Y-65 / CBS 138</strain>
    </source>
</reference>
<reference key="2">
    <citation type="journal article" date="2004" name="Nature">
        <title>Genome evolution in yeasts.</title>
        <authorList>
            <person name="Dujon B."/>
            <person name="Sherman D."/>
            <person name="Fischer G."/>
            <person name="Durrens P."/>
            <person name="Casaregola S."/>
            <person name="Lafontaine I."/>
            <person name="de Montigny J."/>
            <person name="Marck C."/>
            <person name="Neuveglise C."/>
            <person name="Talla E."/>
            <person name="Goffard N."/>
            <person name="Frangeul L."/>
            <person name="Aigle M."/>
            <person name="Anthouard V."/>
            <person name="Babour A."/>
            <person name="Barbe V."/>
            <person name="Barnay S."/>
            <person name="Blanchin S."/>
            <person name="Beckerich J.-M."/>
            <person name="Beyne E."/>
            <person name="Bleykasten C."/>
            <person name="Boisrame A."/>
            <person name="Boyer J."/>
            <person name="Cattolico L."/>
            <person name="Confanioleri F."/>
            <person name="de Daruvar A."/>
            <person name="Despons L."/>
            <person name="Fabre E."/>
            <person name="Fairhead C."/>
            <person name="Ferry-Dumazet H."/>
            <person name="Groppi A."/>
            <person name="Hantraye F."/>
            <person name="Hennequin C."/>
            <person name="Jauniaux N."/>
            <person name="Joyet P."/>
            <person name="Kachouri R."/>
            <person name="Kerrest A."/>
            <person name="Koszul R."/>
            <person name="Lemaire M."/>
            <person name="Lesur I."/>
            <person name="Ma L."/>
            <person name="Muller H."/>
            <person name="Nicaud J.-M."/>
            <person name="Nikolski M."/>
            <person name="Oztas S."/>
            <person name="Ozier-Kalogeropoulos O."/>
            <person name="Pellenz S."/>
            <person name="Potier S."/>
            <person name="Richard G.-F."/>
            <person name="Straub M.-L."/>
            <person name="Suleau A."/>
            <person name="Swennen D."/>
            <person name="Tekaia F."/>
            <person name="Wesolowski-Louvel M."/>
            <person name="Westhof E."/>
            <person name="Wirth B."/>
            <person name="Zeniou-Meyer M."/>
            <person name="Zivanovic Y."/>
            <person name="Bolotin-Fukuhara M."/>
            <person name="Thierry A."/>
            <person name="Bouchier C."/>
            <person name="Caudron B."/>
            <person name="Scarpelli C."/>
            <person name="Gaillardin C."/>
            <person name="Weissenbach J."/>
            <person name="Wincker P."/>
            <person name="Souciet J.-L."/>
        </authorList>
    </citation>
    <scope>NUCLEOTIDE SEQUENCE [LARGE SCALE GENOMIC DNA]</scope>
    <source>
        <strain>ATCC 2001 / BCRC 20586 / JCM 3761 / NBRC 0622 / NRRL Y-65 / CBS 138</strain>
    </source>
</reference>
<evidence type="ECO:0000250" key="1"/>
<evidence type="ECO:0000256" key="2">
    <source>
        <dbReference type="SAM" id="MobiDB-lite"/>
    </source>
</evidence>
<evidence type="ECO:0000305" key="3"/>
<keyword id="KW-0007">Acetylation</keyword>
<keyword id="KW-0158">Chromosome</keyword>
<keyword id="KW-0238">DNA-binding</keyword>
<keyword id="KW-0488">Methylation</keyword>
<keyword id="KW-0544">Nucleosome core</keyword>
<keyword id="KW-0539">Nucleus</keyword>
<keyword id="KW-0597">Phosphoprotein</keyword>
<keyword id="KW-1185">Reference proteome</keyword>
<dbReference type="EMBL" id="AF520060">
    <property type="protein sequence ID" value="AAM74211.1"/>
    <property type="molecule type" value="Genomic_DNA"/>
</dbReference>
<dbReference type="EMBL" id="AF520061">
    <property type="protein sequence ID" value="AAM74217.1"/>
    <property type="molecule type" value="Genomic_DNA"/>
</dbReference>
<dbReference type="EMBL" id="CR380949">
    <property type="protein sequence ID" value="CAG58260.1"/>
    <property type="molecule type" value="Genomic_DNA"/>
</dbReference>
<dbReference type="EMBL" id="CR380954">
    <property type="protein sequence ID" value="CAG60159.1"/>
    <property type="molecule type" value="Genomic_DNA"/>
</dbReference>
<dbReference type="EMBL" id="CR380959">
    <property type="protein sequence ID" value="CAG62613.1"/>
    <property type="molecule type" value="Genomic_DNA"/>
</dbReference>
<dbReference type="RefSeq" id="XP_445354.1">
    <property type="nucleotide sequence ID" value="XM_445354.1"/>
</dbReference>
<dbReference type="RefSeq" id="XP_447226.1">
    <property type="nucleotide sequence ID" value="XM_447226.1"/>
</dbReference>
<dbReference type="RefSeq" id="XP_449637.1">
    <property type="nucleotide sequence ID" value="XM_449637.1"/>
</dbReference>
<dbReference type="SMR" id="P61833"/>
<dbReference type="FunCoup" id="P61833">
    <property type="interactions" value="1074"/>
</dbReference>
<dbReference type="STRING" id="284593.P61833"/>
<dbReference type="EnsemblFungi" id="CAGL0C04114g-T">
    <property type="protein sequence ID" value="CAGL0C04114g-T-p1"/>
    <property type="gene ID" value="CAGL0C04114g"/>
</dbReference>
<dbReference type="EnsemblFungi" id="CAGL0H09856g-T">
    <property type="protein sequence ID" value="CAGL0H09856g-T-p1"/>
    <property type="gene ID" value="CAGL0H09856g"/>
</dbReference>
<dbReference type="EnsemblFungi" id="CAGL0M06655g-T">
    <property type="protein sequence ID" value="CAGL0M06655g-T-p1"/>
    <property type="gene ID" value="CAGL0M06655g"/>
</dbReference>
<dbReference type="GeneID" id="2886846"/>
<dbReference type="KEGG" id="cgr:2886846"/>
<dbReference type="KEGG" id="cgr:2888834"/>
<dbReference type="KEGG" id="cgr:2891685"/>
<dbReference type="CGD" id="CAL0127444">
    <property type="gene designation" value="HHT1"/>
</dbReference>
<dbReference type="CGD" id="CAL0136971">
    <property type="gene designation" value="HHT2"/>
</dbReference>
<dbReference type="CGD" id="CAL0130591">
    <property type="gene designation" value="HHT3"/>
</dbReference>
<dbReference type="VEuPathDB" id="FungiDB:B1J91_C04114g"/>
<dbReference type="VEuPathDB" id="FungiDB:B1J91_H09856g"/>
<dbReference type="VEuPathDB" id="FungiDB:B1J91_M06655g"/>
<dbReference type="VEuPathDB" id="FungiDB:CAGL0C04114g"/>
<dbReference type="VEuPathDB" id="FungiDB:CAGL0H09856g"/>
<dbReference type="VEuPathDB" id="FungiDB:CAGL0M06655g"/>
<dbReference type="eggNOG" id="KOG1745">
    <property type="taxonomic scope" value="Eukaryota"/>
</dbReference>
<dbReference type="HOGENOM" id="CLU_078295_4_0_1"/>
<dbReference type="InParanoid" id="P61833"/>
<dbReference type="OMA" id="HIFAEMA"/>
<dbReference type="Proteomes" id="UP000002428">
    <property type="component" value="Chromosome C"/>
</dbReference>
<dbReference type="Proteomes" id="UP000002428">
    <property type="component" value="Chromosome H"/>
</dbReference>
<dbReference type="Proteomes" id="UP000002428">
    <property type="component" value="Chromosome M"/>
</dbReference>
<dbReference type="GO" id="GO:0043505">
    <property type="term" value="C:CENP-A containing nucleosome"/>
    <property type="evidence" value="ECO:0007669"/>
    <property type="project" value="EnsemblFungi"/>
</dbReference>
<dbReference type="GO" id="GO:0062040">
    <property type="term" value="C:fungal biofilm matrix"/>
    <property type="evidence" value="ECO:0000314"/>
    <property type="project" value="CGD"/>
</dbReference>
<dbReference type="GO" id="GO:0000500">
    <property type="term" value="C:RNA polymerase I upstream activating factor complex"/>
    <property type="evidence" value="ECO:0007669"/>
    <property type="project" value="EnsemblFungi"/>
</dbReference>
<dbReference type="GO" id="GO:0008823">
    <property type="term" value="F:cupric reductase (NADH) activity"/>
    <property type="evidence" value="ECO:0007669"/>
    <property type="project" value="EnsemblFungi"/>
</dbReference>
<dbReference type="GO" id="GO:0003677">
    <property type="term" value="F:DNA binding"/>
    <property type="evidence" value="ECO:0007669"/>
    <property type="project" value="UniProtKB-KW"/>
</dbReference>
<dbReference type="GO" id="GO:0046982">
    <property type="term" value="F:protein heterodimerization activity"/>
    <property type="evidence" value="ECO:0007669"/>
    <property type="project" value="InterPro"/>
</dbReference>
<dbReference type="GO" id="GO:0030527">
    <property type="term" value="F:structural constituent of chromatin"/>
    <property type="evidence" value="ECO:0007669"/>
    <property type="project" value="InterPro"/>
</dbReference>
<dbReference type="GO" id="GO:0009060">
    <property type="term" value="P:aerobic respiration"/>
    <property type="evidence" value="ECO:0007669"/>
    <property type="project" value="EnsemblFungi"/>
</dbReference>
<dbReference type="GO" id="GO:0070911">
    <property type="term" value="P:global genome nucleotide-excision repair"/>
    <property type="evidence" value="ECO:0007669"/>
    <property type="project" value="EnsemblFungi"/>
</dbReference>
<dbReference type="GO" id="GO:0006878">
    <property type="term" value="P:intracellular copper ion homeostasis"/>
    <property type="evidence" value="ECO:0007669"/>
    <property type="project" value="EnsemblFungi"/>
</dbReference>
<dbReference type="GO" id="GO:0042790">
    <property type="term" value="P:nucleolar large rRNA transcription by RNA polymerase I"/>
    <property type="evidence" value="ECO:0007669"/>
    <property type="project" value="EnsemblFungi"/>
</dbReference>
<dbReference type="GO" id="GO:0045943">
    <property type="term" value="P:positive regulation of transcription by RNA polymerase I"/>
    <property type="evidence" value="ECO:0007669"/>
    <property type="project" value="EnsemblFungi"/>
</dbReference>
<dbReference type="GO" id="GO:0043935">
    <property type="term" value="P:sexual sporulation resulting in formation of a cellular spore"/>
    <property type="evidence" value="ECO:0007669"/>
    <property type="project" value="EnsemblFungi"/>
</dbReference>
<dbReference type="CDD" id="cd22911">
    <property type="entry name" value="HFD_H3"/>
    <property type="match status" value="1"/>
</dbReference>
<dbReference type="FunFam" id="1.10.20.10:FF:000010">
    <property type="entry name" value="Histone H3"/>
    <property type="match status" value="1"/>
</dbReference>
<dbReference type="Gene3D" id="1.10.20.10">
    <property type="entry name" value="Histone, subunit A"/>
    <property type="match status" value="1"/>
</dbReference>
<dbReference type="InterPro" id="IPR009072">
    <property type="entry name" value="Histone-fold"/>
</dbReference>
<dbReference type="InterPro" id="IPR007125">
    <property type="entry name" value="Histone_H2A/H2B/H3"/>
</dbReference>
<dbReference type="InterPro" id="IPR000164">
    <property type="entry name" value="Histone_H3/CENP-A"/>
</dbReference>
<dbReference type="PANTHER" id="PTHR11426">
    <property type="entry name" value="HISTONE H3"/>
    <property type="match status" value="1"/>
</dbReference>
<dbReference type="Pfam" id="PF00125">
    <property type="entry name" value="Histone"/>
    <property type="match status" value="1"/>
</dbReference>
<dbReference type="PRINTS" id="PR00622">
    <property type="entry name" value="HISTONEH3"/>
</dbReference>
<dbReference type="SMART" id="SM00428">
    <property type="entry name" value="H3"/>
    <property type="match status" value="1"/>
</dbReference>
<dbReference type="SUPFAM" id="SSF47113">
    <property type="entry name" value="Histone-fold"/>
    <property type="match status" value="1"/>
</dbReference>
<dbReference type="PROSITE" id="PS00322">
    <property type="entry name" value="HISTONE_H3_1"/>
    <property type="match status" value="1"/>
</dbReference>
<dbReference type="PROSITE" id="PS00959">
    <property type="entry name" value="HISTONE_H3_2"/>
    <property type="match status" value="1"/>
</dbReference>
<sequence length="136" mass="15356">MARTKQTARKSTGGKAPRKQLASKAARKSAPSTGGVKKPHRYKPGTVALREIRRFQKSTELLIRKLPFQRLVREIAQDFKTDLRFQSSAIGALQESVEAYLVSLFEDTNLAAIHAKRVTIQKKDIKLARRLRGERS</sequence>
<organism>
    <name type="scientific">Candida glabrata (strain ATCC 2001 / BCRC 20586 / JCM 3761 / NBRC 0622 / NRRL Y-65 / CBS 138)</name>
    <name type="common">Yeast</name>
    <name type="synonym">Nakaseomyces glabratus</name>
    <dbReference type="NCBI Taxonomy" id="284593"/>
    <lineage>
        <taxon>Eukaryota</taxon>
        <taxon>Fungi</taxon>
        <taxon>Dikarya</taxon>
        <taxon>Ascomycota</taxon>
        <taxon>Saccharomycotina</taxon>
        <taxon>Saccharomycetes</taxon>
        <taxon>Saccharomycetales</taxon>
        <taxon>Saccharomycetaceae</taxon>
        <taxon>Nakaseomyces</taxon>
    </lineage>
</organism>
<comment type="function">
    <text>Core component of nucleosome. Nucleosomes wrap and compact DNA into chromatin, limiting DNA accessibility to the cellular machineries which require DNA as a template. Histones thereby play a central role in transcription regulation, DNA repair, DNA replication and chromosomal stability. DNA accessibility is regulated via a complex set of post-translational modifications of histones, also called histone code, and nucleosome remodeling.</text>
</comment>
<comment type="subunit">
    <text>The nucleosome is a histone octamer containing two molecules each of H2A, H2B, H3 and H4 assembled in one H3-H4 heterotetramer and two H2A-H2B heterodimers. The octamer wraps approximately 147 bp of DNA.</text>
</comment>
<comment type="subcellular location">
    <subcellularLocation>
        <location evidence="1">Nucleus</location>
    </subcellularLocation>
    <subcellularLocation>
        <location evidence="1">Chromosome</location>
    </subcellularLocation>
</comment>
<comment type="PTM">
    <text evidence="1">Phosphorylated by IPL1 to form H3S10ph. H3S10ph promotes subsequent H3K14ac formation by GCN5 and is required for transcriptional activation through TBP recruitment to the promoters (By similarity).</text>
</comment>
<comment type="PTM">
    <text evidence="1">Mono-, di- and trimethylated by the COMPASS complex to form H3K4me1/2/3. H3K4me activates gene expression by regulating transcription elongation and plays a role in telomere length maintenance. H3K4me enrichment correlates with transcription levels, and occurs in a 5' to 3' gradient with H3K4me3 enrichment at the 5'-end of genes, shifting to H3K4me2 and then H3K4me1. Methylated by SET2 to form H3K36me. H3K36me represses gene expression. Methylated by DOT1 to form H3K79me. H3K79me is required for association of SIR proteins with telomeric regions and for telomeric silencing. The COMPASS-mediated formation of H3K4me2/3 and the DOT1-mediated formation of H3K79me require H2BK123ub1 (By similarity).</text>
</comment>
<comment type="PTM">
    <text evidence="1">Acetylation of histone H3 leads to transcriptional activation. H3K14ac formation by GCN5 is promoted by H3S10ph. H3K14ac can also be formed by ESA1. H3K56ac formation occurs predominantly in newly synthesized H3 molecules during G1, S and G2/M of the cell cycle and may be involved in DNA repair (By similarity).</text>
</comment>
<comment type="similarity">
    <text evidence="3">Belongs to the histone H3 family.</text>
</comment>
<comment type="caution">
    <text evidence="3">To ensure consistency between histone entries, we follow the 'Brno' nomenclature for histone modifications, with positions referring to those used in the literature for the 'closest' model organism. Due to slight variations in histone sequences between organisms and to the presence of initiator methionine in UniProtKB/Swiss-Prot sequences, the actual positions of modified amino acids in the sequence generally differ. In this entry the following conventions are used: H3K4me1/2/3 = mono-, di- and trimethylated Lys-5; H3K9ac = acetylated Lys-10; H3K9me1 = monomethylated Lys-10; H3S10ph = phosphorylated Ser-11; H3K14ac = acetylated Lys-15; H3K14me2 = dimethylated Lys-15; H3K18ac = acetylated Lys-19; H3K18me1 = monomethylated Lys-19; H3K23ac = acetylated Lys-24; H3K23me1 = monomethylated Lys-24; H3K27ac = acetylated Lys-28; H3K27me1/2/3 = mono-, di- and trimethylated Lys-28; H3K36ac = acetylated Lys-37; H3K36me1/2/3 = mono-, di- and trimethylated Lys-37; H3K56ac = acetylated Lys-57; H3K64ac = acetylated Lys-65; H3K79me1/2/3 = mono-, di- and trimethylated Lys-80.</text>
</comment>
<name>H3_CANGA</name>
<protein>
    <recommendedName>
        <fullName>Histone H3</fullName>
    </recommendedName>
</protein>
<proteinExistence type="inferred from homology"/>
<gene>
    <name type="primary">HHT1</name>
    <name type="ordered locus">CAGL0C04114g</name>
</gene>
<gene>
    <name type="primary">HHT2</name>
    <name type="ordered locus">CAGL0H09856g</name>
</gene>
<gene>
    <name type="primary">HHT3</name>
    <name type="ordered locus">CAGL0M06655g</name>
</gene>
<accession>P61833</accession>
<accession>Q8NJS5</accession>